<name>VPY_MEDTR</name>
<reference key="1">
    <citation type="journal article" date="2010" name="Plant J.">
        <title>Medicago truncatula Vapyrin is a novel protein required for arbuscular mycorrhizal symbiosis.</title>
        <authorList>
            <person name="Pumplin N."/>
            <person name="Mondo S.J."/>
            <person name="Topp S."/>
            <person name="Starker C.G."/>
            <person name="Gantt J.S."/>
            <person name="Harrison M.J."/>
        </authorList>
    </citation>
    <scope>NUCLEOTIDE SEQUENCE [GENOMIC DNA]</scope>
    <scope>FUNCTION</scope>
    <scope>DISRUPTION PHENOTYPE</scope>
    <scope>DEVELOPMENTAL STAGE</scope>
    <scope>INDUCTION BY GLOMUS VERSIFORME AND RHIZOBIA BACTERIA</scope>
    <scope>SUBCELLULAR LOCATION</scope>
    <scope>TISSUE SPECIFICITY</scope>
    <source>
        <strain>cv. Jemalong A17</strain>
    </source>
</reference>
<reference key="2">
    <citation type="journal article" date="2011" name="Plant J.">
        <title>Vapyrin, a gene essential for intracellular progression of arbuscular mycorrhizal symbiosis, is also essential for infection by rhizobia in the nodule symbiosis of Medicago truncatula.</title>
        <authorList>
            <person name="Murray J.D."/>
            <person name="Muni R.R."/>
            <person name="Torres-Jerez I."/>
            <person name="Tang Y."/>
            <person name="Allen S."/>
            <person name="Andriankaja M."/>
            <person name="Li G."/>
            <person name="Laxmi A."/>
            <person name="Cheng X."/>
            <person name="Wen J."/>
            <person name="Vaughan D."/>
            <person name="Schultze M."/>
            <person name="Sun J."/>
            <person name="Charpentier M."/>
            <person name="Oldroyd G."/>
            <person name="Tadege M."/>
            <person name="Ratet P."/>
            <person name="Mysore K.S."/>
            <person name="Chen R."/>
            <person name="Udvardi M.K."/>
        </authorList>
    </citation>
    <scope>NUCLEOTIDE SEQUENCE [GENOMIC DNA]</scope>
    <scope>FUNCTION</scope>
    <scope>DISRUPTION PHENOTYPE</scope>
    <scope>INDUCTION BY SINORHIZOBIUM MELILOTI NOD FACTORS</scope>
    <scope>TISSUE SPECIFICITY</scope>
    <scope>INDUCTION BY MYCORRHIZAL FUNGI AND NITROGEN-FIXING RHIZOBIAL BACTERIA</scope>
    <scope>SUBCELLULAR LOCATION</scope>
</reference>
<reference key="3">
    <citation type="journal article" date="2011" name="Nature">
        <title>The Medicago genome provides insight into the evolution of rhizobial symbioses.</title>
        <authorList>
            <person name="Young N.D."/>
            <person name="Debelle F."/>
            <person name="Oldroyd G.E.D."/>
            <person name="Geurts R."/>
            <person name="Cannon S.B."/>
            <person name="Udvardi M.K."/>
            <person name="Benedito V.A."/>
            <person name="Mayer K.F.X."/>
            <person name="Gouzy J."/>
            <person name="Schoof H."/>
            <person name="Van de Peer Y."/>
            <person name="Proost S."/>
            <person name="Cook D.R."/>
            <person name="Meyers B.C."/>
            <person name="Spannagl M."/>
            <person name="Cheung F."/>
            <person name="De Mita S."/>
            <person name="Krishnakumar V."/>
            <person name="Gundlach H."/>
            <person name="Zhou S."/>
            <person name="Mudge J."/>
            <person name="Bharti A.K."/>
            <person name="Murray J.D."/>
            <person name="Naoumkina M.A."/>
            <person name="Rosen B."/>
            <person name="Silverstein K.A.T."/>
            <person name="Tang H."/>
            <person name="Rombauts S."/>
            <person name="Zhao P.X."/>
            <person name="Zhou P."/>
            <person name="Barbe V."/>
            <person name="Bardou P."/>
            <person name="Bechner M."/>
            <person name="Bellec A."/>
            <person name="Berger A."/>
            <person name="Berges H."/>
            <person name="Bidwell S."/>
            <person name="Bisseling T."/>
            <person name="Choisne N."/>
            <person name="Couloux A."/>
            <person name="Denny R."/>
            <person name="Deshpande S."/>
            <person name="Dai X."/>
            <person name="Doyle J.J."/>
            <person name="Dudez A.-M."/>
            <person name="Farmer A.D."/>
            <person name="Fouteau S."/>
            <person name="Franken C."/>
            <person name="Gibelin C."/>
            <person name="Gish J."/>
            <person name="Goldstein S."/>
            <person name="Gonzalez A.J."/>
            <person name="Green P.J."/>
            <person name="Hallab A."/>
            <person name="Hartog M."/>
            <person name="Hua A."/>
            <person name="Humphray S.J."/>
            <person name="Jeong D.-H."/>
            <person name="Jing Y."/>
            <person name="Jocker A."/>
            <person name="Kenton S.M."/>
            <person name="Kim D.-J."/>
            <person name="Klee K."/>
            <person name="Lai H."/>
            <person name="Lang C."/>
            <person name="Lin S."/>
            <person name="Macmil S.L."/>
            <person name="Magdelenat G."/>
            <person name="Matthews L."/>
            <person name="McCorrison J."/>
            <person name="Monaghan E.L."/>
            <person name="Mun J.-H."/>
            <person name="Najar F.Z."/>
            <person name="Nicholson C."/>
            <person name="Noirot C."/>
            <person name="O'Bleness M."/>
            <person name="Paule C.R."/>
            <person name="Poulain J."/>
            <person name="Prion F."/>
            <person name="Qin B."/>
            <person name="Qu C."/>
            <person name="Retzel E.F."/>
            <person name="Riddle C."/>
            <person name="Sallet E."/>
            <person name="Samain S."/>
            <person name="Samson N."/>
            <person name="Sanders I."/>
            <person name="Saurat O."/>
            <person name="Scarpelli C."/>
            <person name="Schiex T."/>
            <person name="Segurens B."/>
            <person name="Severin A.J."/>
            <person name="Sherrier D.J."/>
            <person name="Shi R."/>
            <person name="Sims S."/>
            <person name="Singer S.R."/>
            <person name="Sinharoy S."/>
            <person name="Sterck L."/>
            <person name="Viollet A."/>
            <person name="Wang B.-B."/>
            <person name="Wang K."/>
            <person name="Wang M."/>
            <person name="Wang X."/>
            <person name="Warfsmann J."/>
            <person name="Weissenbach J."/>
            <person name="White D.D."/>
            <person name="White J.D."/>
            <person name="Wiley G.B."/>
            <person name="Wincker P."/>
            <person name="Xing Y."/>
            <person name="Yang L."/>
            <person name="Yao Z."/>
            <person name="Ying F."/>
            <person name="Zhai J."/>
            <person name="Zhou L."/>
            <person name="Zuber A."/>
            <person name="Denarie J."/>
            <person name="Dixon R.A."/>
            <person name="May G.D."/>
            <person name="Schwartz D.C."/>
            <person name="Rogers J."/>
            <person name="Quetier F."/>
            <person name="Town C.D."/>
            <person name="Roe B.A."/>
        </authorList>
    </citation>
    <scope>NUCLEOTIDE SEQUENCE [LARGE SCALE GENOMIC DNA]</scope>
    <source>
        <strain>cv. Jemalong A17</strain>
    </source>
</reference>
<reference key="4">
    <citation type="journal article" date="2014" name="BMC Genomics">
        <title>An improved genome release (version Mt4.0) for the model legume Medicago truncatula.</title>
        <authorList>
            <person name="Tang H."/>
            <person name="Krishnakumar V."/>
            <person name="Bidwell S."/>
            <person name="Rosen B."/>
            <person name="Chan A."/>
            <person name="Zhou S."/>
            <person name="Gentzbittel L."/>
            <person name="Childs K.L."/>
            <person name="Yandell M."/>
            <person name="Gundlach H."/>
            <person name="Mayer K.F."/>
            <person name="Schwartz D.C."/>
            <person name="Town C.D."/>
        </authorList>
    </citation>
    <scope>GENOME REANNOTATION</scope>
    <source>
        <strain>cv. Jemalong A17</strain>
    </source>
</reference>
<reference key="5">
    <citation type="journal article" date="2018" name="Nat. Plants">
        <title>Whole-genome landscape of Medicago truncatula symbiotic genes.</title>
        <authorList>
            <person name="Pecrix Y."/>
            <person name="Staton S.E."/>
            <person name="Sallet E."/>
            <person name="Lelandais-Briere C."/>
            <person name="Moreau S."/>
            <person name="Carrere S."/>
            <person name="Blein T."/>
            <person name="Jardinaud M.F."/>
            <person name="Latrasse D."/>
            <person name="Zouine M."/>
            <person name="Zahm M."/>
            <person name="Kreplak J."/>
            <person name="Mayjonade B."/>
            <person name="Satge C."/>
            <person name="Perez M."/>
            <person name="Cauet S."/>
            <person name="Marande W."/>
            <person name="Chantry-Darmon C."/>
            <person name="Lopez-Roques C."/>
            <person name="Bouchez O."/>
            <person name="Berard A."/>
            <person name="Debelle F."/>
            <person name="Munos S."/>
            <person name="Bendahmane A."/>
            <person name="Berges H."/>
            <person name="Niebel A."/>
            <person name="Buitink J."/>
            <person name="Frugier F."/>
            <person name="Benhamed M."/>
            <person name="Crespi M."/>
            <person name="Gouzy J."/>
            <person name="Gamas P."/>
        </authorList>
    </citation>
    <scope>NUCLEOTIDE SEQUENCE [LARGE SCALE GENOMIC DNA]</scope>
    <source>
        <strain>cv. Jemalong A17</strain>
    </source>
</reference>
<reference key="6">
    <citation type="journal article" date="2015" name="Curr. Biol.">
        <title>EXO70I is required for development of a sub-domain of the periarbuscular membrane during arbuscular mycorrhizal symbiosis.</title>
        <authorList>
            <person name="Zhang X."/>
            <person name="Pumplin N."/>
            <person name="Ivanov S."/>
            <person name="Harrison M.J."/>
        </authorList>
    </citation>
    <scope>INTERACTION WITH EX70I</scope>
    <scope>SUBCELLULAR LOCATION</scope>
</reference>
<reference key="7">
    <citation type="journal article" date="2015" name="Plant Physiol.">
        <title>Hyphal branching during arbuscule development requires reduced arbuscular mycorrhiza1.</title>
        <authorList>
            <person name="Park H.-J."/>
            <person name="Floss D.S."/>
            <person name="Levesque-Tremblay V."/>
            <person name="Bravo A."/>
            <person name="Harrison M.J."/>
        </authorList>
    </citation>
    <scope>INDUCTION BY RAM1 AND GLOMUS VERSIFORME</scope>
</reference>
<sequence>MDRLIKLDPSNIVLIRVEEGQKCLGKITLNNVMYTMPVAFRIQPLIKTRYTIKPQSGIISPLASLVIEITYHPPQQQGSNNLPHSFPFSDDSFLLHSVLAPGAAIKEPSSMFDSVPSDWFTTKKKQVFIDSAIKVMFVGSQILTQLVEDGNSMDDIREVLEKSDPLWESVNSKDSQGQTLLHLAISKTRPDLVQLILEFKPDIEAINSVGSTPLEAASSSGESLIVELLLAHKANTEGSESSVFRPIHHASREGHMEILRLLLLKGARVDSLTKDGNTSLHLAVEEKRRDCARLLLANGARTDVRNMREGDTPLHIAAANGDENMVKLLLHKGATKYVRNKLGKTAFDVAAENGHSRLFDALRLGDNLCAAARKGEVRTIQKVLESGGVINGRDQNGWTSLHRAAFKGRMDAVRFLVEKGIDLDAKDEDGYTALHCAAESGHADVTEFLVKKGADVEARTNKGVSALQIVESLNYVGITRILVNGGASREGLGEKPPSAPSKIPFGRKVESGSVMTMKKKMSSRTRALRGSFDHSMPLAVL</sequence>
<keyword id="KW-0040">ANK repeat</keyword>
<keyword id="KW-1003">Cell membrane</keyword>
<keyword id="KW-0963">Cytoplasm</keyword>
<keyword id="KW-0472">Membrane</keyword>
<keyword id="KW-0539">Nucleus</keyword>
<keyword id="KW-1185">Reference proteome</keyword>
<keyword id="KW-0677">Repeat</keyword>
<comment type="function">
    <text evidence="3 4">Required for arbuscular mycorrhizal (AM) symbiosis with AM fungi (e.g. Glomus versiforme and Gigaspora gigantea) both during fungal passage across root epidermis and for arbuscule formation in cortical cells; this symbiosis promotes phosphorus (P) and copper (Cu) uptake (PubMed:19912567, PubMed:21223389). Essential for infection by symbiotic nitrogen-fixing rhizobial bacteria (e.g. Sinorhizobium meliloti) leading to the formation of root nodules (PubMed:21223389).</text>
</comment>
<comment type="subunit">
    <text evidence="5">Interacts with EX70I at the periarbuscular membrane (PAM) around the arbuscule hyphal tips.</text>
</comment>
<comment type="subcellular location">
    <subcellularLocation>
        <location evidence="3 4">Cytoplasm</location>
    </subcellularLocation>
    <subcellularLocation>
        <location evidence="3 4">Nucleus</location>
    </subcellularLocation>
    <subcellularLocation>
        <location evidence="5">Cell membrane</location>
        <topology evidence="9">Peripheral membrane protein</topology>
        <orientation evidence="9">Cytoplasmic side</orientation>
    </subcellularLocation>
    <text evidence="3 5">In cells containing arbuscular mycorrhizal (AM) fungal hyphae and arbuscules, accumulates in small puncta that move through the cytoplasm, likely mobile spherical structures that are associated with the tonoplast referred to as 'tonospheres' (PubMed:19912567). Present in cytoplasmic strands below hyphopodia (PubMed:19912567). Observed associated with EX70I in zones adjacent to the periarbuscular membrane (PAM) around the arbuscule hyphal tips (PubMed:26234213). Occasionally observed in the nucleus of cells containing fungal hyphae (PubMed:19912567).</text>
</comment>
<comment type="tissue specificity">
    <text evidence="3 4">Expressed in roots.</text>
</comment>
<comment type="developmental stage">
    <text evidence="3">First observed in root vascular tissues and root caps (PubMed:19912567). During arbuscular mycorrhizal (AM) symbiosis with (AM) fungi (e.g. Glomus versiforme), accumulates transiently in the root epidermis and outer cortical cells coincident with hyphal penetration (hyphopodia), and later present in cortex cells during arbuscule formation (PubMed:19912567).</text>
</comment>
<comment type="induction">
    <text evidence="3 4 6">Accumulates in roots, in a RAM1-dependent manner, during colonization by arbuscular mycorrhizal (AM) fungi (e.g. Glomus versiforme and Gigaspora gigantea) (PubMed:19912567, PubMed:21223389, PubMed:26511916). Induced in roots (including root hairs) by rhizobial bacteria (e.g. Sinorhizobium meliloti) synthesized Nod factors in a NFP, DMI1 and DMI3-dependent manner (PubMed:21223389). Also observed in root nodules that arise from symbiotic associations with nitrogen-fixing Rhizobia (PubMed:19912567, PubMed:21223389).</text>
</comment>
<comment type="disruption phenotype">
    <text evidence="3 4">Impaired arbuscular mycorrhiza (AM) fungi (e.g. Glomus versiforme and Gigaspora gigantea) passage across root epidermis and abolished arbuscule formation in root cortex during AM symbiosis, thus leading to aborted hyphopodia and no arbuscules (PubMed:19912567, PubMed:21223389). Reduced accumulation of PT4 in AM roots (PubMed:19912567). Abnormal nitrogen-fixing rhizobial bacteria (e.g. Sinorhizobium meliloti) infection threads and fewer small white root nodules, but normal calcium spiking in root hairs in response to Nod factors (PubMed:21223389).</text>
</comment>
<evidence type="ECO:0000255" key="1"/>
<evidence type="ECO:0000255" key="2">
    <source>
        <dbReference type="PROSITE-ProRule" id="PRU00132"/>
    </source>
</evidence>
<evidence type="ECO:0000269" key="3">
    <source>
    </source>
</evidence>
<evidence type="ECO:0000269" key="4">
    <source>
    </source>
</evidence>
<evidence type="ECO:0000269" key="5">
    <source>
    </source>
</evidence>
<evidence type="ECO:0000269" key="6">
    <source>
    </source>
</evidence>
<evidence type="ECO:0000303" key="7">
    <source>
    </source>
</evidence>
<evidence type="ECO:0000303" key="8">
    <source>
    </source>
</evidence>
<evidence type="ECO:0000305" key="9"/>
<evidence type="ECO:0000312" key="10">
    <source>
        <dbReference type="EMBL" id="KEH25576.1"/>
    </source>
</evidence>
<evidence type="ECO:0000312" key="11">
    <source>
        <dbReference type="EMBL" id="RHN50766.1"/>
    </source>
</evidence>
<feature type="chain" id="PRO_0000450029" description="Protein VAPYRIN">
    <location>
        <begin position="1"/>
        <end position="541"/>
    </location>
</feature>
<feature type="domain" description="MSP" evidence="2">
    <location>
        <begin position="4"/>
        <end position="138"/>
    </location>
</feature>
<feature type="repeat" description="ANK 1" evidence="1">
    <location>
        <begin position="176"/>
        <end position="205"/>
    </location>
</feature>
<feature type="repeat" description="ANK 2" evidence="1">
    <location>
        <begin position="209"/>
        <end position="238"/>
    </location>
</feature>
<feature type="repeat" description="ANK 3" evidence="1">
    <location>
        <begin position="242"/>
        <end position="271"/>
    </location>
</feature>
<feature type="repeat" description="ANK 4" evidence="1">
    <location>
        <begin position="275"/>
        <end position="304"/>
    </location>
</feature>
<feature type="repeat" description="ANK 5" evidence="1">
    <location>
        <begin position="309"/>
        <end position="338"/>
    </location>
</feature>
<feature type="repeat" description="ANK 6" evidence="1">
    <location>
        <begin position="342"/>
        <end position="372"/>
    </location>
</feature>
<feature type="repeat" description="ANK 7" evidence="1">
    <location>
        <begin position="374"/>
        <end position="392"/>
    </location>
</feature>
<feature type="repeat" description="ANK 8" evidence="1">
    <location>
        <begin position="396"/>
        <end position="425"/>
    </location>
</feature>
<feature type="repeat" description="ANK 9" evidence="1">
    <location>
        <begin position="429"/>
        <end position="458"/>
    </location>
</feature>
<feature type="repeat" description="ANK 10" evidence="1">
    <location>
        <begin position="462"/>
        <end position="491"/>
    </location>
</feature>
<dbReference type="EMBL" id="GQ423209">
    <property type="protein sequence ID" value="ADC33495.1"/>
    <property type="molecule type" value="Genomic_DNA"/>
</dbReference>
<dbReference type="EMBL" id="FJ795648">
    <property type="protein sequence ID" value="ACX94227.1"/>
    <property type="molecule type" value="Genomic_DNA"/>
</dbReference>
<dbReference type="EMBL" id="CM001222">
    <property type="protein sequence ID" value="KEH25576.1"/>
    <property type="molecule type" value="Genomic_DNA"/>
</dbReference>
<dbReference type="EMBL" id="PSQE01000006">
    <property type="protein sequence ID" value="RHN50766.1"/>
    <property type="molecule type" value="Genomic_DNA"/>
</dbReference>
<dbReference type="RefSeq" id="XP_013451548.1">
    <property type="nucleotide sequence ID" value="XM_013596094.1"/>
</dbReference>
<dbReference type="SMR" id="D3J162"/>
<dbReference type="STRING" id="3880.D3J162"/>
<dbReference type="EnsemblPlants" id="rna35094">
    <property type="protein sequence ID" value="RHN50766.1"/>
    <property type="gene ID" value="gene35094"/>
</dbReference>
<dbReference type="GeneID" id="25495843"/>
<dbReference type="Gramene" id="rna35094">
    <property type="protein sequence ID" value="RHN50766.1"/>
    <property type="gene ID" value="gene35094"/>
</dbReference>
<dbReference type="KEGG" id="mtr:25495843"/>
<dbReference type="HOGENOM" id="CLU_000134_53_1_1"/>
<dbReference type="OrthoDB" id="194358at2759"/>
<dbReference type="Proteomes" id="UP000002051">
    <property type="component" value="Chromosome 6"/>
</dbReference>
<dbReference type="Proteomes" id="UP000265566">
    <property type="component" value="Chromosome 6"/>
</dbReference>
<dbReference type="GO" id="GO:0005737">
    <property type="term" value="C:cytoplasm"/>
    <property type="evidence" value="ECO:0000314"/>
    <property type="project" value="UniProtKB"/>
</dbReference>
<dbReference type="GO" id="GO:0005634">
    <property type="term" value="C:nucleus"/>
    <property type="evidence" value="ECO:0000314"/>
    <property type="project" value="UniProtKB"/>
</dbReference>
<dbReference type="GO" id="GO:0085042">
    <property type="term" value="C:periarbuscular membrane"/>
    <property type="evidence" value="ECO:0000314"/>
    <property type="project" value="UniProtKB"/>
</dbReference>
<dbReference type="GO" id="GO:0005886">
    <property type="term" value="C:plasma membrane"/>
    <property type="evidence" value="ECO:0007669"/>
    <property type="project" value="UniProtKB-SubCell"/>
</dbReference>
<dbReference type="GO" id="GO:0036377">
    <property type="term" value="P:arbuscular mycorrhizal association"/>
    <property type="evidence" value="ECO:0000315"/>
    <property type="project" value="UniProtKB"/>
</dbReference>
<dbReference type="GO" id="GO:0009877">
    <property type="term" value="P:nodulation"/>
    <property type="evidence" value="ECO:0000315"/>
    <property type="project" value="UniProtKB"/>
</dbReference>
<dbReference type="GO" id="GO:0002237">
    <property type="term" value="P:response to molecule of bacterial origin"/>
    <property type="evidence" value="ECO:0000270"/>
    <property type="project" value="UniProtKB"/>
</dbReference>
<dbReference type="GO" id="GO:0009609">
    <property type="term" value="P:response to symbiotic bacterium"/>
    <property type="evidence" value="ECO:0000315"/>
    <property type="project" value="UniProtKB"/>
</dbReference>
<dbReference type="GO" id="GO:0009610">
    <property type="term" value="P:response to symbiotic fungus"/>
    <property type="evidence" value="ECO:0000270"/>
    <property type="project" value="UniProtKB"/>
</dbReference>
<dbReference type="Gene3D" id="1.25.40.20">
    <property type="entry name" value="Ankyrin repeat-containing domain"/>
    <property type="match status" value="4"/>
</dbReference>
<dbReference type="Gene3D" id="2.60.40.10">
    <property type="entry name" value="Immunoglobulins"/>
    <property type="match status" value="1"/>
</dbReference>
<dbReference type="InterPro" id="IPR002110">
    <property type="entry name" value="Ankyrin_rpt"/>
</dbReference>
<dbReference type="InterPro" id="IPR036770">
    <property type="entry name" value="Ankyrin_rpt-contain_sf"/>
</dbReference>
<dbReference type="InterPro" id="IPR013783">
    <property type="entry name" value="Ig-like_fold"/>
</dbReference>
<dbReference type="InterPro" id="IPR000535">
    <property type="entry name" value="MSP_dom"/>
</dbReference>
<dbReference type="InterPro" id="IPR051165">
    <property type="entry name" value="Multifunctional_ANK_Repeat"/>
</dbReference>
<dbReference type="InterPro" id="IPR008962">
    <property type="entry name" value="PapD-like_sf"/>
</dbReference>
<dbReference type="PANTHER" id="PTHR24123">
    <property type="entry name" value="ANKYRIN REPEAT-CONTAINING"/>
    <property type="match status" value="1"/>
</dbReference>
<dbReference type="PANTHER" id="PTHR24123:SF33">
    <property type="entry name" value="PROTEIN HOS4"/>
    <property type="match status" value="1"/>
</dbReference>
<dbReference type="Pfam" id="PF12796">
    <property type="entry name" value="Ank_2"/>
    <property type="match status" value="4"/>
</dbReference>
<dbReference type="Pfam" id="PF00635">
    <property type="entry name" value="Motile_Sperm"/>
    <property type="match status" value="1"/>
</dbReference>
<dbReference type="PRINTS" id="PR01415">
    <property type="entry name" value="ANKYRIN"/>
</dbReference>
<dbReference type="SMART" id="SM00248">
    <property type="entry name" value="ANK"/>
    <property type="match status" value="8"/>
</dbReference>
<dbReference type="SUPFAM" id="SSF48403">
    <property type="entry name" value="Ankyrin repeat"/>
    <property type="match status" value="1"/>
</dbReference>
<dbReference type="SUPFAM" id="SSF49354">
    <property type="entry name" value="PapD-like"/>
    <property type="match status" value="1"/>
</dbReference>
<dbReference type="PROSITE" id="PS50297">
    <property type="entry name" value="ANK_REP_REGION"/>
    <property type="match status" value="1"/>
</dbReference>
<dbReference type="PROSITE" id="PS50088">
    <property type="entry name" value="ANK_REPEAT"/>
    <property type="match status" value="7"/>
</dbReference>
<dbReference type="PROSITE" id="PS50202">
    <property type="entry name" value="MSP"/>
    <property type="match status" value="1"/>
</dbReference>
<proteinExistence type="evidence at protein level"/>
<protein>
    <recommendedName>
        <fullName evidence="7">Protein VAPYRIN</fullName>
        <shortName evidence="7">MtVpy</shortName>
    </recommendedName>
    <alternativeName>
        <fullName evidence="8">Protein HERMES</fullName>
    </alternativeName>
</protein>
<organism>
    <name type="scientific">Medicago truncatula</name>
    <name type="common">Barrel medic</name>
    <name type="synonym">Medicago tribuloides</name>
    <dbReference type="NCBI Taxonomy" id="3880"/>
    <lineage>
        <taxon>Eukaryota</taxon>
        <taxon>Viridiplantae</taxon>
        <taxon>Streptophyta</taxon>
        <taxon>Embryophyta</taxon>
        <taxon>Tracheophyta</taxon>
        <taxon>Spermatophyta</taxon>
        <taxon>Magnoliopsida</taxon>
        <taxon>eudicotyledons</taxon>
        <taxon>Gunneridae</taxon>
        <taxon>Pentapetalae</taxon>
        <taxon>rosids</taxon>
        <taxon>fabids</taxon>
        <taxon>Fabales</taxon>
        <taxon>Fabaceae</taxon>
        <taxon>Papilionoideae</taxon>
        <taxon>50 kb inversion clade</taxon>
        <taxon>NPAAA clade</taxon>
        <taxon>Hologalegina</taxon>
        <taxon>IRL clade</taxon>
        <taxon>Trifolieae</taxon>
        <taxon>Medicago</taxon>
    </lineage>
</organism>
<gene>
    <name evidence="7" type="primary">VPY</name>
    <name evidence="8" type="synonym">FNB4</name>
    <name evidence="8" type="synonym">HMS</name>
    <name evidence="10" type="ordered locus">MTR_6g027840</name>
    <name evidence="11" type="ORF">MtrunA17_Chr6g0461061</name>
</gene>
<accession>D3J162</accession>